<keyword id="KW-0067">ATP-binding</keyword>
<keyword id="KW-0418">Kinase</keyword>
<keyword id="KW-0460">Magnesium</keyword>
<keyword id="KW-0479">Metal-binding</keyword>
<keyword id="KW-0511">Multifunctional enzyme</keyword>
<keyword id="KW-0547">Nucleotide-binding</keyword>
<keyword id="KW-1185">Reference proteome</keyword>
<keyword id="KW-0723">Serine/threonine-protein kinase</keyword>
<keyword id="KW-0808">Transferase</keyword>
<organism>
    <name type="scientific">Pelodictyon phaeoclathratiforme (strain DSM 5477 / BU-1)</name>
    <dbReference type="NCBI Taxonomy" id="324925"/>
    <lineage>
        <taxon>Bacteria</taxon>
        <taxon>Pseudomonadati</taxon>
        <taxon>Chlorobiota</taxon>
        <taxon>Chlorobiia</taxon>
        <taxon>Chlorobiales</taxon>
        <taxon>Chlorobiaceae</taxon>
        <taxon>Chlorobium/Pelodictyon group</taxon>
        <taxon>Pelodictyon</taxon>
    </lineage>
</organism>
<dbReference type="EC" id="2.7.11.-" evidence="1"/>
<dbReference type="EC" id="2.7.4.-" evidence="1"/>
<dbReference type="EMBL" id="CP001110">
    <property type="protein sequence ID" value="ACF42985.1"/>
    <property type="molecule type" value="Genomic_DNA"/>
</dbReference>
<dbReference type="RefSeq" id="WP_012507480.1">
    <property type="nucleotide sequence ID" value="NC_011060.1"/>
</dbReference>
<dbReference type="SMR" id="B4SDZ4"/>
<dbReference type="STRING" id="324925.Ppha_0690"/>
<dbReference type="KEGG" id="pph:Ppha_0690"/>
<dbReference type="eggNOG" id="COG1493">
    <property type="taxonomic scope" value="Bacteria"/>
</dbReference>
<dbReference type="HOGENOM" id="CLU_052030_0_1_10"/>
<dbReference type="OrthoDB" id="9778803at2"/>
<dbReference type="Proteomes" id="UP000002724">
    <property type="component" value="Chromosome"/>
</dbReference>
<dbReference type="GO" id="GO:0005524">
    <property type="term" value="F:ATP binding"/>
    <property type="evidence" value="ECO:0007669"/>
    <property type="project" value="UniProtKB-UniRule"/>
</dbReference>
<dbReference type="GO" id="GO:0000287">
    <property type="term" value="F:magnesium ion binding"/>
    <property type="evidence" value="ECO:0007669"/>
    <property type="project" value="UniProtKB-UniRule"/>
</dbReference>
<dbReference type="GO" id="GO:0000155">
    <property type="term" value="F:phosphorelay sensor kinase activity"/>
    <property type="evidence" value="ECO:0007669"/>
    <property type="project" value="InterPro"/>
</dbReference>
<dbReference type="GO" id="GO:0004674">
    <property type="term" value="F:protein serine/threonine kinase activity"/>
    <property type="evidence" value="ECO:0007669"/>
    <property type="project" value="UniProtKB-KW"/>
</dbReference>
<dbReference type="GO" id="GO:0004712">
    <property type="term" value="F:protein serine/threonine/tyrosine kinase activity"/>
    <property type="evidence" value="ECO:0007669"/>
    <property type="project" value="UniProtKB-UniRule"/>
</dbReference>
<dbReference type="GO" id="GO:0006109">
    <property type="term" value="P:regulation of carbohydrate metabolic process"/>
    <property type="evidence" value="ECO:0007669"/>
    <property type="project" value="UniProtKB-UniRule"/>
</dbReference>
<dbReference type="CDD" id="cd01918">
    <property type="entry name" value="HprK_C"/>
    <property type="match status" value="1"/>
</dbReference>
<dbReference type="Gene3D" id="3.40.1390.20">
    <property type="entry name" value="HprK N-terminal domain-like"/>
    <property type="match status" value="1"/>
</dbReference>
<dbReference type="Gene3D" id="3.40.50.300">
    <property type="entry name" value="P-loop containing nucleotide triphosphate hydrolases"/>
    <property type="match status" value="1"/>
</dbReference>
<dbReference type="HAMAP" id="MF_01249">
    <property type="entry name" value="HPr_kinase"/>
    <property type="match status" value="1"/>
</dbReference>
<dbReference type="InterPro" id="IPR003755">
    <property type="entry name" value="HPr(Ser)_kin/Pase"/>
</dbReference>
<dbReference type="InterPro" id="IPR011104">
    <property type="entry name" value="Hpr_kin/Pase_C"/>
</dbReference>
<dbReference type="InterPro" id="IPR011126">
    <property type="entry name" value="Hpr_kin/Pase_Hpr_N"/>
</dbReference>
<dbReference type="InterPro" id="IPR027417">
    <property type="entry name" value="P-loop_NTPase"/>
</dbReference>
<dbReference type="InterPro" id="IPR028979">
    <property type="entry name" value="Ser_kin/Pase_Hpr-like_N_sf"/>
</dbReference>
<dbReference type="NCBIfam" id="TIGR00679">
    <property type="entry name" value="hpr-ser"/>
    <property type="match status" value="1"/>
</dbReference>
<dbReference type="PANTHER" id="PTHR30305:SF1">
    <property type="entry name" value="HPR KINASE_PHOSPHORYLASE"/>
    <property type="match status" value="1"/>
</dbReference>
<dbReference type="PANTHER" id="PTHR30305">
    <property type="entry name" value="PROTEIN YJDM-RELATED"/>
    <property type="match status" value="1"/>
</dbReference>
<dbReference type="Pfam" id="PF07475">
    <property type="entry name" value="Hpr_kinase_C"/>
    <property type="match status" value="1"/>
</dbReference>
<dbReference type="Pfam" id="PF02603">
    <property type="entry name" value="Hpr_kinase_N"/>
    <property type="match status" value="1"/>
</dbReference>
<dbReference type="SUPFAM" id="SSF75138">
    <property type="entry name" value="HprK N-terminal domain-like"/>
    <property type="match status" value="1"/>
</dbReference>
<dbReference type="SUPFAM" id="SSF53795">
    <property type="entry name" value="PEP carboxykinase-like"/>
    <property type="match status" value="1"/>
</dbReference>
<name>HPRK_PELPB</name>
<gene>
    <name evidence="1" type="primary">hprK</name>
    <name type="ordered locus">Ppha_0690</name>
</gene>
<accession>B4SDZ4</accession>
<proteinExistence type="inferred from homology"/>
<feature type="chain" id="PRO_1000139907" description="HPr kinase/phosphorylase">
    <location>
        <begin position="1"/>
        <end position="331"/>
    </location>
</feature>
<feature type="region of interest" description="Important for the catalytic mechanism of both phosphorylation and dephosphorylation" evidence="1">
    <location>
        <begin position="217"/>
        <end position="226"/>
    </location>
</feature>
<feature type="region of interest" description="Important for the catalytic mechanism of dephosphorylation" evidence="1">
    <location>
        <begin position="280"/>
        <end position="285"/>
    </location>
</feature>
<feature type="active site" evidence="1">
    <location>
        <position position="153"/>
    </location>
</feature>
<feature type="active site" evidence="1">
    <location>
        <position position="174"/>
    </location>
</feature>
<feature type="active site" description="Proton acceptor; for phosphorylation activity. Proton donor; for dephosphorylation activity" evidence="1">
    <location>
        <position position="192"/>
    </location>
</feature>
<feature type="active site" evidence="1">
    <location>
        <position position="259"/>
    </location>
</feature>
<feature type="binding site" evidence="1">
    <location>
        <begin position="168"/>
        <end position="175"/>
    </location>
    <ligand>
        <name>ATP</name>
        <dbReference type="ChEBI" id="CHEBI:30616"/>
    </ligand>
</feature>
<feature type="binding site" evidence="1">
    <location>
        <position position="175"/>
    </location>
    <ligand>
        <name>Mg(2+)</name>
        <dbReference type="ChEBI" id="CHEBI:18420"/>
    </ligand>
</feature>
<feature type="binding site" evidence="1">
    <location>
        <position position="218"/>
    </location>
    <ligand>
        <name>Mg(2+)</name>
        <dbReference type="ChEBI" id="CHEBI:18420"/>
    </ligand>
</feature>
<sequence length="331" mass="37846">MNLDQKGLKKRSITVAYFFNTIGKKNDIKFRRLNEVDEQKRRIFERDLHRPGLALAGFTNLFTYKRVQILGNTETRFLNHLEEEERNRVFANLVRFKMPCIILTSNNKLPQNLLDMATNADIPVYVTRCSSTKTIYIVTGFLDDQFSLYQQYHGSMVDVYGVGVLLTGKSGLGKSEIALDLVERGHGLVADDVVVIHRKGESMVLNAKRNNIIDHFMEIRGLGVVDVRANFGIRAIRDVKEVQVVVELLEWNKEIVYERLGLDIKSRKILGVDVPLVELPIFPGKNITVIIEVVALNFLLKRYSNYVAAEALTDRINDVINREKGEEDSYE</sequence>
<evidence type="ECO:0000255" key="1">
    <source>
        <dbReference type="HAMAP-Rule" id="MF_01249"/>
    </source>
</evidence>
<reference key="1">
    <citation type="submission" date="2008-06" db="EMBL/GenBank/DDBJ databases">
        <title>Complete sequence of Pelodictyon phaeoclathratiforme BU-1.</title>
        <authorList>
            <consortium name="US DOE Joint Genome Institute"/>
            <person name="Lucas S."/>
            <person name="Copeland A."/>
            <person name="Lapidus A."/>
            <person name="Glavina del Rio T."/>
            <person name="Dalin E."/>
            <person name="Tice H."/>
            <person name="Bruce D."/>
            <person name="Goodwin L."/>
            <person name="Pitluck S."/>
            <person name="Schmutz J."/>
            <person name="Larimer F."/>
            <person name="Land M."/>
            <person name="Hauser L."/>
            <person name="Kyrpides N."/>
            <person name="Mikhailova N."/>
            <person name="Liu Z."/>
            <person name="Li T."/>
            <person name="Zhao F."/>
            <person name="Overmann J."/>
            <person name="Bryant D.A."/>
            <person name="Richardson P."/>
        </authorList>
    </citation>
    <scope>NUCLEOTIDE SEQUENCE [LARGE SCALE GENOMIC DNA]</scope>
    <source>
        <strain>DSM 5477 / BU-1</strain>
    </source>
</reference>
<comment type="function">
    <text evidence="1">Catalyzes the ATP- as well as the pyrophosphate-dependent phosphorylation of a specific serine residue in HPr, a phosphocarrier protein of the phosphoenolpyruvate-dependent sugar phosphotransferase system (PTS). HprK/P also catalyzes the pyrophosphate-producing, inorganic phosphate-dependent dephosphorylation (phosphorolysis) of seryl-phosphorylated HPr (P-Ser-HPr).</text>
</comment>
<comment type="catalytic activity">
    <reaction evidence="1">
        <text>[HPr protein]-L-serine + ATP = [HPr protein]-O-phospho-L-serine + ADP + H(+)</text>
        <dbReference type="Rhea" id="RHEA:46600"/>
        <dbReference type="Rhea" id="RHEA-COMP:11602"/>
        <dbReference type="Rhea" id="RHEA-COMP:11603"/>
        <dbReference type="ChEBI" id="CHEBI:15378"/>
        <dbReference type="ChEBI" id="CHEBI:29999"/>
        <dbReference type="ChEBI" id="CHEBI:30616"/>
        <dbReference type="ChEBI" id="CHEBI:83421"/>
        <dbReference type="ChEBI" id="CHEBI:456216"/>
    </reaction>
</comment>
<comment type="catalytic activity">
    <reaction evidence="1">
        <text>[HPr protein]-O-phospho-L-serine + phosphate + H(+) = [HPr protein]-L-serine + diphosphate</text>
        <dbReference type="Rhea" id="RHEA:46604"/>
        <dbReference type="Rhea" id="RHEA-COMP:11602"/>
        <dbReference type="Rhea" id="RHEA-COMP:11603"/>
        <dbReference type="ChEBI" id="CHEBI:15378"/>
        <dbReference type="ChEBI" id="CHEBI:29999"/>
        <dbReference type="ChEBI" id="CHEBI:33019"/>
        <dbReference type="ChEBI" id="CHEBI:43474"/>
        <dbReference type="ChEBI" id="CHEBI:83421"/>
    </reaction>
</comment>
<comment type="cofactor">
    <cofactor evidence="1">
        <name>Mg(2+)</name>
        <dbReference type="ChEBI" id="CHEBI:18420"/>
    </cofactor>
</comment>
<comment type="subunit">
    <text evidence="1">Homohexamer.</text>
</comment>
<comment type="domain">
    <text evidence="1">The Walker A ATP-binding motif also binds Pi and PPi.</text>
</comment>
<comment type="miscellaneous">
    <text evidence="1">Both phosphorylation and phosphorolysis are carried out by the same active site and suggest a common mechanism for both reactions.</text>
</comment>
<comment type="similarity">
    <text evidence="1">Belongs to the HPrK/P family.</text>
</comment>
<protein>
    <recommendedName>
        <fullName evidence="1">HPr kinase/phosphorylase</fullName>
        <shortName evidence="1">HPrK/P</shortName>
        <ecNumber evidence="1">2.7.11.-</ecNumber>
        <ecNumber evidence="1">2.7.4.-</ecNumber>
    </recommendedName>
    <alternativeName>
        <fullName evidence="1">HPr(Ser) kinase/phosphorylase</fullName>
    </alternativeName>
</protein>